<feature type="chain" id="PRO_1000091232" description="UPF0102 protein CLL_A1253">
    <location>
        <begin position="1"/>
        <end position="122"/>
    </location>
</feature>
<comment type="similarity">
    <text evidence="1">Belongs to the UPF0102 family.</text>
</comment>
<sequence length="122" mass="14538">MKKFNKDIGTYCEKLSCDYLIEHNFKILECNFKNFLGEIDIICIKNSILIIIEVKGRYNYEFGLPKESVSISKQKNIIKVTKSYINYKKLYNFNVRFDVIEIYLNKLNSSYKINHIKDAFRT</sequence>
<name>Y1253_CLOBB</name>
<accession>B2TJ35</accession>
<evidence type="ECO:0000255" key="1">
    <source>
        <dbReference type="HAMAP-Rule" id="MF_00048"/>
    </source>
</evidence>
<reference key="1">
    <citation type="submission" date="2008-04" db="EMBL/GenBank/DDBJ databases">
        <title>Complete sequence of Clostridium botulinum strain Eklund.</title>
        <authorList>
            <person name="Brinkac L.M."/>
            <person name="Brown J.L."/>
            <person name="Bruce D."/>
            <person name="Detter C."/>
            <person name="Munk C."/>
            <person name="Smith L.A."/>
            <person name="Smith T.J."/>
            <person name="Sutton G."/>
            <person name="Brettin T.S."/>
        </authorList>
    </citation>
    <scope>NUCLEOTIDE SEQUENCE [LARGE SCALE GENOMIC DNA]</scope>
    <source>
        <strain>Eklund 17B / Type B</strain>
    </source>
</reference>
<organism>
    <name type="scientific">Clostridium botulinum (strain Eklund 17B / Type B)</name>
    <dbReference type="NCBI Taxonomy" id="935198"/>
    <lineage>
        <taxon>Bacteria</taxon>
        <taxon>Bacillati</taxon>
        <taxon>Bacillota</taxon>
        <taxon>Clostridia</taxon>
        <taxon>Eubacteriales</taxon>
        <taxon>Clostridiaceae</taxon>
        <taxon>Clostridium</taxon>
    </lineage>
</organism>
<proteinExistence type="inferred from homology"/>
<gene>
    <name type="ordered locus">CLL_A1253</name>
</gene>
<protein>
    <recommendedName>
        <fullName evidence="1">UPF0102 protein CLL_A1253</fullName>
    </recommendedName>
</protein>
<dbReference type="EMBL" id="CP001056">
    <property type="protein sequence ID" value="ACD22795.1"/>
    <property type="molecule type" value="Genomic_DNA"/>
</dbReference>
<dbReference type="SMR" id="B2TJ35"/>
<dbReference type="KEGG" id="cbk:CLL_A1253"/>
<dbReference type="PATRIC" id="fig|935198.13.peg.1199"/>
<dbReference type="HOGENOM" id="CLU_115353_2_1_9"/>
<dbReference type="Proteomes" id="UP000001195">
    <property type="component" value="Chromosome"/>
</dbReference>
<dbReference type="GO" id="GO:0003676">
    <property type="term" value="F:nucleic acid binding"/>
    <property type="evidence" value="ECO:0007669"/>
    <property type="project" value="InterPro"/>
</dbReference>
<dbReference type="Gene3D" id="3.40.1350.10">
    <property type="match status" value="1"/>
</dbReference>
<dbReference type="HAMAP" id="MF_00048">
    <property type="entry name" value="UPF0102"/>
    <property type="match status" value="1"/>
</dbReference>
<dbReference type="InterPro" id="IPR011335">
    <property type="entry name" value="Restrct_endonuc-II-like"/>
</dbReference>
<dbReference type="InterPro" id="IPR011856">
    <property type="entry name" value="tRNA_endonuc-like_dom_sf"/>
</dbReference>
<dbReference type="InterPro" id="IPR003509">
    <property type="entry name" value="UPF0102_YraN-like"/>
</dbReference>
<dbReference type="PANTHER" id="PTHR34039">
    <property type="entry name" value="UPF0102 PROTEIN YRAN"/>
    <property type="match status" value="1"/>
</dbReference>
<dbReference type="PANTHER" id="PTHR34039:SF1">
    <property type="entry name" value="UPF0102 PROTEIN YRAN"/>
    <property type="match status" value="1"/>
</dbReference>
<dbReference type="Pfam" id="PF02021">
    <property type="entry name" value="UPF0102"/>
    <property type="match status" value="1"/>
</dbReference>
<dbReference type="SUPFAM" id="SSF52980">
    <property type="entry name" value="Restriction endonuclease-like"/>
    <property type="match status" value="1"/>
</dbReference>